<comment type="function">
    <text evidence="2 6">G-protein-coupled receptor for histamine, a biogenic amine that functions as an immune modulator and a neurotransmitter (PubMed:1722337). Through the H1 receptor, histamine mediates the contraction of smooth muscles and increases capillary permeability due to contraction of terminal venules. Also mediates neurotransmission in the central nervous system and thereby regulates circadian rhythms, emotional and locomotor activities as well as cognitive functions (By similarity).</text>
</comment>
<comment type="subcellular location">
    <subcellularLocation>
        <location evidence="6">Cell membrane</location>
        <topology evidence="1">Multi-pass membrane protein</topology>
    </subcellularLocation>
</comment>
<comment type="tissue specificity">
    <text evidence="6">Brain, lung, small intestine, uterus, adrenal medulla and spleen.</text>
</comment>
<comment type="domain">
    <text evidence="1">Histamine activates the receptor by forming hydrogen bonds with transmembrane domains 3 and 6, squashing the ligand-binding pocket on the extracellular side and opening the cavity for G-protein engagement on the intracellular side.</text>
</comment>
<comment type="PTM">
    <text evidence="1">Phosphorylation at sites in the second and third cytoplasmic loops independently contribute to agonist-induced receptor down-regulation.</text>
</comment>
<comment type="similarity">
    <text evidence="4">Belongs to the G-protein coupled receptor 1 family.</text>
</comment>
<name>HRH1_BOVIN</name>
<evidence type="ECO:0000250" key="1">
    <source>
        <dbReference type="UniProtKB" id="P35367"/>
    </source>
</evidence>
<evidence type="ECO:0000250" key="2">
    <source>
        <dbReference type="UniProtKB" id="P70174"/>
    </source>
</evidence>
<evidence type="ECO:0000255" key="3"/>
<evidence type="ECO:0000255" key="4">
    <source>
        <dbReference type="PROSITE-ProRule" id="PRU00521"/>
    </source>
</evidence>
<evidence type="ECO:0000256" key="5">
    <source>
        <dbReference type="SAM" id="MobiDB-lite"/>
    </source>
</evidence>
<evidence type="ECO:0000269" key="6">
    <source>
    </source>
</evidence>
<evidence type="ECO:0000303" key="7">
    <source>
    </source>
</evidence>
<evidence type="ECO:0000305" key="8"/>
<feature type="chain" id="PRO_0000069673" description="Histamine H1 receptor">
    <location>
        <begin position="1"/>
        <end position="491"/>
    </location>
</feature>
<feature type="topological domain" description="Extracellular" evidence="8">
    <location>
        <begin position="1"/>
        <end position="30"/>
    </location>
</feature>
<feature type="transmembrane region" description="Helical; Name=1" evidence="1">
    <location>
        <begin position="31"/>
        <end position="51"/>
    </location>
</feature>
<feature type="topological domain" description="Cytoplasmic" evidence="8">
    <location>
        <begin position="52"/>
        <end position="65"/>
    </location>
</feature>
<feature type="transmembrane region" description="Helical; Name=2" evidence="1">
    <location>
        <begin position="66"/>
        <end position="90"/>
    </location>
</feature>
<feature type="topological domain" description="Extracellular" evidence="8">
    <location>
        <begin position="91"/>
        <end position="98"/>
    </location>
</feature>
<feature type="transmembrane region" description="Helical; Name=3" evidence="1">
    <location>
        <begin position="99"/>
        <end position="124"/>
    </location>
</feature>
<feature type="topological domain" description="Cytoplasmic" evidence="8">
    <location>
        <begin position="125"/>
        <end position="145"/>
    </location>
</feature>
<feature type="transmembrane region" description="Helical; Name=4" evidence="1">
    <location>
        <begin position="146"/>
        <end position="165"/>
    </location>
</feature>
<feature type="topological domain" description="Extracellular" evidence="8">
    <location>
        <begin position="166"/>
        <end position="189"/>
    </location>
</feature>
<feature type="transmembrane region" description="Helical; Name=5" evidence="1">
    <location>
        <begin position="190"/>
        <end position="212"/>
    </location>
</feature>
<feature type="topological domain" description="Cytoplasmic" evidence="8">
    <location>
        <begin position="213"/>
        <end position="420"/>
    </location>
</feature>
<feature type="transmembrane region" description="Helical; Name=6" evidence="1">
    <location>
        <begin position="421"/>
        <end position="444"/>
    </location>
</feature>
<feature type="topological domain" description="Extracellular" evidence="8">
    <location>
        <begin position="445"/>
        <end position="450"/>
    </location>
</feature>
<feature type="transmembrane region" description="Helical; Name=7" evidence="1">
    <location>
        <begin position="451"/>
        <end position="473"/>
    </location>
</feature>
<feature type="topological domain" description="Cytoplasmic" evidence="8">
    <location>
        <begin position="474"/>
        <end position="491"/>
    </location>
</feature>
<feature type="region of interest" description="Important for agonist binding" evidence="1">
    <location>
        <begin position="108"/>
        <end position="113"/>
    </location>
</feature>
<feature type="region of interest" description="Disordered" evidence="5">
    <location>
        <begin position="246"/>
        <end position="297"/>
    </location>
</feature>
<feature type="region of interest" description="Disordered" evidence="5">
    <location>
        <begin position="360"/>
        <end position="385"/>
    </location>
</feature>
<feature type="region of interest" description="Important for agonist binding" evidence="1">
    <location>
        <begin position="428"/>
        <end position="432"/>
    </location>
</feature>
<feature type="compositionally biased region" description="Basic and acidic residues" evidence="5">
    <location>
        <begin position="252"/>
        <end position="262"/>
    </location>
</feature>
<feature type="binding site" evidence="1">
    <location>
        <position position="108"/>
    </location>
    <ligand>
        <name>histamine</name>
        <dbReference type="ChEBI" id="CHEBI:58432"/>
    </ligand>
</feature>
<feature type="binding site" evidence="1">
    <location>
        <position position="113"/>
    </location>
    <ligand>
        <name>histamine</name>
        <dbReference type="ChEBI" id="CHEBI:58432"/>
    </ligand>
</feature>
<feature type="binding site" evidence="1">
    <location>
        <position position="199"/>
    </location>
    <ligand>
        <name>histamine</name>
        <dbReference type="ChEBI" id="CHEBI:58432"/>
    </ligand>
</feature>
<feature type="binding site" evidence="1">
    <location>
        <position position="435"/>
    </location>
    <ligand>
        <name>histamine</name>
        <dbReference type="ChEBI" id="CHEBI:58432"/>
    </ligand>
</feature>
<feature type="modified residue" description="Phosphothreonine" evidence="1">
    <location>
        <position position="141"/>
    </location>
</feature>
<feature type="modified residue" description="Phosphothreonine" evidence="1">
    <location>
        <position position="143"/>
    </location>
</feature>
<feature type="modified residue" description="Phosphoserine" evidence="1">
    <location>
        <position position="231"/>
    </location>
</feature>
<feature type="modified residue" description="Phosphoserine" evidence="2">
    <location>
        <position position="384"/>
    </location>
</feature>
<feature type="modified residue" description="Phosphoserine" evidence="1">
    <location>
        <position position="400"/>
    </location>
</feature>
<feature type="modified residue" description="Phosphoserine" evidence="1">
    <location>
        <position position="402"/>
    </location>
</feature>
<feature type="glycosylation site" description="N-linked (GlcNAc...) asparagine" evidence="3">
    <location>
        <position position="5"/>
    </location>
</feature>
<feature type="glycosylation site" description="N-linked (GlcNAc...) asparagine" evidence="3">
    <location>
        <position position="18"/>
    </location>
</feature>
<feature type="disulfide bond" evidence="4">
    <location>
        <begin position="101"/>
        <end position="181"/>
    </location>
</feature>
<feature type="disulfide bond" evidence="4">
    <location>
        <begin position="445"/>
        <end position="448"/>
    </location>
</feature>
<dbReference type="EMBL" id="D10197">
    <property type="protein sequence ID" value="BAA01045.1"/>
    <property type="molecule type" value="mRNA"/>
</dbReference>
<dbReference type="PIR" id="A41632">
    <property type="entry name" value="A41632"/>
</dbReference>
<dbReference type="SMR" id="P30546"/>
<dbReference type="FunCoup" id="P30546">
    <property type="interactions" value="736"/>
</dbReference>
<dbReference type="BindingDB" id="P30546"/>
<dbReference type="ChEMBL" id="CHEMBL3573"/>
<dbReference type="GlyCosmos" id="P30546">
    <property type="glycosylation" value="2 sites, No reported glycans"/>
</dbReference>
<dbReference type="GlyGen" id="P30546">
    <property type="glycosylation" value="2 sites"/>
</dbReference>
<dbReference type="PaxDb" id="9913-ENSBTAP00000001896"/>
<dbReference type="eggNOG" id="KOG4220">
    <property type="taxonomic scope" value="Eukaryota"/>
</dbReference>
<dbReference type="InParanoid" id="P30546"/>
<dbReference type="OrthoDB" id="10071887at2759"/>
<dbReference type="Proteomes" id="UP000009136">
    <property type="component" value="Unplaced"/>
</dbReference>
<dbReference type="GO" id="GO:0030425">
    <property type="term" value="C:dendrite"/>
    <property type="evidence" value="ECO:0000318"/>
    <property type="project" value="GO_Central"/>
</dbReference>
<dbReference type="GO" id="GO:0005886">
    <property type="term" value="C:plasma membrane"/>
    <property type="evidence" value="ECO:0000315"/>
    <property type="project" value="UniProtKB"/>
</dbReference>
<dbReference type="GO" id="GO:0045202">
    <property type="term" value="C:synapse"/>
    <property type="evidence" value="ECO:0007669"/>
    <property type="project" value="GOC"/>
</dbReference>
<dbReference type="GO" id="GO:0004969">
    <property type="term" value="F:histamine receptor activity"/>
    <property type="evidence" value="ECO:0000315"/>
    <property type="project" value="UniProtKB"/>
</dbReference>
<dbReference type="GO" id="GO:0071420">
    <property type="term" value="P:cellular response to histamine"/>
    <property type="evidence" value="ECO:0000315"/>
    <property type="project" value="UniProtKB"/>
</dbReference>
<dbReference type="GO" id="GO:0007268">
    <property type="term" value="P:chemical synaptic transmission"/>
    <property type="evidence" value="ECO:0000318"/>
    <property type="project" value="GO_Central"/>
</dbReference>
<dbReference type="GO" id="GO:0007186">
    <property type="term" value="P:G protein-coupled receptor signaling pathway"/>
    <property type="evidence" value="ECO:0000315"/>
    <property type="project" value="UniProtKB"/>
</dbReference>
<dbReference type="GO" id="GO:0007187">
    <property type="term" value="P:G protein-coupled receptor signaling pathway, coupled to cyclic nucleotide second messenger"/>
    <property type="evidence" value="ECO:0000318"/>
    <property type="project" value="GO_Central"/>
</dbReference>
<dbReference type="GO" id="GO:0045907">
    <property type="term" value="P:positive regulation of vasoconstriction"/>
    <property type="evidence" value="ECO:0007669"/>
    <property type="project" value="InterPro"/>
</dbReference>
<dbReference type="GO" id="GO:0043114">
    <property type="term" value="P:regulation of vascular permeability"/>
    <property type="evidence" value="ECO:0007669"/>
    <property type="project" value="InterPro"/>
</dbReference>
<dbReference type="CDD" id="cd15050">
    <property type="entry name" value="7tmA_Histamine_H1R"/>
    <property type="match status" value="1"/>
</dbReference>
<dbReference type="FunFam" id="1.20.1070.10:FF:000147">
    <property type="entry name" value="Histamine H1 receptor"/>
    <property type="match status" value="1"/>
</dbReference>
<dbReference type="FunFam" id="1.20.1070.10:FF:000189">
    <property type="entry name" value="Histamine H1 receptor"/>
    <property type="match status" value="1"/>
</dbReference>
<dbReference type="Gene3D" id="1.20.1070.10">
    <property type="entry name" value="Rhodopsin 7-helix transmembrane proteins"/>
    <property type="match status" value="2"/>
</dbReference>
<dbReference type="InterPro" id="IPR000276">
    <property type="entry name" value="GPCR_Rhodpsn"/>
</dbReference>
<dbReference type="InterPro" id="IPR017452">
    <property type="entry name" value="GPCR_Rhodpsn_7TM"/>
</dbReference>
<dbReference type="InterPro" id="IPR000921">
    <property type="entry name" value="Histamine_H1_rcpt"/>
</dbReference>
<dbReference type="PANTHER" id="PTHR24247">
    <property type="entry name" value="5-HYDROXYTRYPTAMINE RECEPTOR"/>
    <property type="match status" value="1"/>
</dbReference>
<dbReference type="PANTHER" id="PTHR24247:SF223">
    <property type="entry name" value="HISTAMINE H1 RECEPTOR"/>
    <property type="match status" value="1"/>
</dbReference>
<dbReference type="Pfam" id="PF00001">
    <property type="entry name" value="7tm_1"/>
    <property type="match status" value="1"/>
</dbReference>
<dbReference type="PRINTS" id="PR00237">
    <property type="entry name" value="GPCRRHODOPSN"/>
</dbReference>
<dbReference type="PRINTS" id="PR00530">
    <property type="entry name" value="HISTAMINEH1R"/>
</dbReference>
<dbReference type="SMART" id="SM01381">
    <property type="entry name" value="7TM_GPCR_Srsx"/>
    <property type="match status" value="1"/>
</dbReference>
<dbReference type="SUPFAM" id="SSF81321">
    <property type="entry name" value="Family A G protein-coupled receptor-like"/>
    <property type="match status" value="1"/>
</dbReference>
<dbReference type="PROSITE" id="PS00237">
    <property type="entry name" value="G_PROTEIN_RECEP_F1_1"/>
    <property type="match status" value="1"/>
</dbReference>
<dbReference type="PROSITE" id="PS50262">
    <property type="entry name" value="G_PROTEIN_RECEP_F1_2"/>
    <property type="match status" value="1"/>
</dbReference>
<sequence>MTCPNSSCVFEDKMCQGNKTAPANDAQLTPLVVVLSTISLVTVGLNLLVLYAVRSERKLHTVGNLYIVSLSVADLIVGVVVMPMNILYLLMSRWSLGRPLCLFWLSMDYVASTASIFSVFILCIDRYRSVQQPLKYLRYRTKTRASITILAAWFLSFLWIIPILGWRHFQPKTPEPREDKCETDFYNVTWFKVMTAIINFYLPTLLMLWFYAKIYKAVRQHCQHRELINGSFPSFSDMKMKPENLQVGAKKPGKESPWEVLKRKPKDTGGGPVLKPPSQEPKEVTSPGVFSQEKEEKDGELGKFYCFPLDTVQAQPEAEGSGRGYATINQSQNQLEMGEQGLSMPGAKEALEDQILGDSQSFSRTDSDTPAEPAPAKGKSRSESSTGLEYIKFTWKRLRSHSRQYVSGLHMNRERKAAKQLGFIMAAFIICWIPYFIFFMVIAFCESCCNQHVHMFTIWLGYINSTLNPLIYPLCNENFKKTFKKILHIRS</sequence>
<accession>P30546</accession>
<organism>
    <name type="scientific">Bos taurus</name>
    <name type="common">Bovine</name>
    <dbReference type="NCBI Taxonomy" id="9913"/>
    <lineage>
        <taxon>Eukaryota</taxon>
        <taxon>Metazoa</taxon>
        <taxon>Chordata</taxon>
        <taxon>Craniata</taxon>
        <taxon>Vertebrata</taxon>
        <taxon>Euteleostomi</taxon>
        <taxon>Mammalia</taxon>
        <taxon>Eutheria</taxon>
        <taxon>Laurasiatheria</taxon>
        <taxon>Artiodactyla</taxon>
        <taxon>Ruminantia</taxon>
        <taxon>Pecora</taxon>
        <taxon>Bovidae</taxon>
        <taxon>Bovinae</taxon>
        <taxon>Bos</taxon>
    </lineage>
</organism>
<gene>
    <name evidence="1" type="primary">HRH1</name>
</gene>
<proteinExistence type="evidence at transcript level"/>
<keyword id="KW-1003">Cell membrane</keyword>
<keyword id="KW-1015">Disulfide bond</keyword>
<keyword id="KW-0297">G-protein coupled receptor</keyword>
<keyword id="KW-0325">Glycoprotein</keyword>
<keyword id="KW-0472">Membrane</keyword>
<keyword id="KW-0597">Phosphoprotein</keyword>
<keyword id="KW-0675">Receptor</keyword>
<keyword id="KW-1185">Reference proteome</keyword>
<keyword id="KW-0807">Transducer</keyword>
<keyword id="KW-0812">Transmembrane</keyword>
<keyword id="KW-1133">Transmembrane helix</keyword>
<reference key="1">
    <citation type="journal article" date="1991" name="Proc. Natl. Acad. Sci. U.S.A.">
        <title>Expression cloning of a cDNA encoding the bovine histamine H1 receptor.</title>
        <authorList>
            <person name="Yamashita M."/>
            <person name="Fukui H."/>
            <person name="Sugama K."/>
            <person name="Horio Y."/>
            <person name="Ito S."/>
            <person name="Mizuguchi H."/>
            <person name="Wada H."/>
        </authorList>
    </citation>
    <scope>NUCLEOTIDE SEQUENCE [MRNA]</scope>
    <scope>FUNCTION</scope>
    <scope>SUBCELLULAR LOCATION</scope>
    <scope>TISSUE SPECIFICITY</scope>
    <source>
        <tissue>Adrenal medulla</tissue>
    </source>
</reference>
<protein>
    <recommendedName>
        <fullName evidence="7">Histamine H1 receptor</fullName>
        <shortName evidence="1">H1R</shortName>
        <shortName>HH1R</shortName>
    </recommendedName>
</protein>